<accession>B2IM38</accession>
<evidence type="ECO:0000255" key="1">
    <source>
        <dbReference type="HAMAP-Rule" id="MF_00451"/>
    </source>
</evidence>
<keyword id="KW-0067">ATP-binding</keyword>
<keyword id="KW-0963">Cytoplasm</keyword>
<keyword id="KW-0418">Kinase</keyword>
<keyword id="KW-0460">Magnesium</keyword>
<keyword id="KW-0479">Metal-binding</keyword>
<keyword id="KW-0546">Nucleotide metabolism</keyword>
<keyword id="KW-0547">Nucleotide-binding</keyword>
<keyword id="KW-0597">Phosphoprotein</keyword>
<keyword id="KW-0808">Transferase</keyword>
<gene>
    <name evidence="1" type="primary">ndk</name>
    <name type="ordered locus">SPCG_1923</name>
</gene>
<proteinExistence type="inferred from homology"/>
<name>NDK_STRPS</name>
<dbReference type="EC" id="2.7.4.6" evidence="1"/>
<dbReference type="EMBL" id="CP001033">
    <property type="protein sequence ID" value="ACB91176.1"/>
    <property type="molecule type" value="Genomic_DNA"/>
</dbReference>
<dbReference type="RefSeq" id="WP_000438289.1">
    <property type="nucleotide sequence ID" value="NC_010582.1"/>
</dbReference>
<dbReference type="SMR" id="B2IM38"/>
<dbReference type="KEGG" id="spw:SPCG_1923"/>
<dbReference type="HOGENOM" id="CLU_060216_6_3_9"/>
<dbReference type="GO" id="GO:0005737">
    <property type="term" value="C:cytoplasm"/>
    <property type="evidence" value="ECO:0007669"/>
    <property type="project" value="UniProtKB-SubCell"/>
</dbReference>
<dbReference type="GO" id="GO:0005524">
    <property type="term" value="F:ATP binding"/>
    <property type="evidence" value="ECO:0007669"/>
    <property type="project" value="UniProtKB-UniRule"/>
</dbReference>
<dbReference type="GO" id="GO:0046872">
    <property type="term" value="F:metal ion binding"/>
    <property type="evidence" value="ECO:0007669"/>
    <property type="project" value="UniProtKB-KW"/>
</dbReference>
<dbReference type="GO" id="GO:0004550">
    <property type="term" value="F:nucleoside diphosphate kinase activity"/>
    <property type="evidence" value="ECO:0007669"/>
    <property type="project" value="UniProtKB-UniRule"/>
</dbReference>
<dbReference type="GO" id="GO:0006241">
    <property type="term" value="P:CTP biosynthetic process"/>
    <property type="evidence" value="ECO:0007669"/>
    <property type="project" value="UniProtKB-UniRule"/>
</dbReference>
<dbReference type="GO" id="GO:0006183">
    <property type="term" value="P:GTP biosynthetic process"/>
    <property type="evidence" value="ECO:0007669"/>
    <property type="project" value="UniProtKB-UniRule"/>
</dbReference>
<dbReference type="GO" id="GO:0006228">
    <property type="term" value="P:UTP biosynthetic process"/>
    <property type="evidence" value="ECO:0007669"/>
    <property type="project" value="UniProtKB-UniRule"/>
</dbReference>
<dbReference type="CDD" id="cd04413">
    <property type="entry name" value="NDPk_I"/>
    <property type="match status" value="1"/>
</dbReference>
<dbReference type="FunFam" id="3.30.70.141:FF:000013">
    <property type="entry name" value="Nucleoside diphosphate kinase"/>
    <property type="match status" value="1"/>
</dbReference>
<dbReference type="Gene3D" id="3.30.70.141">
    <property type="entry name" value="Nucleoside diphosphate kinase-like domain"/>
    <property type="match status" value="1"/>
</dbReference>
<dbReference type="HAMAP" id="MF_00451">
    <property type="entry name" value="NDP_kinase"/>
    <property type="match status" value="1"/>
</dbReference>
<dbReference type="InterPro" id="IPR034907">
    <property type="entry name" value="NDK-like_dom"/>
</dbReference>
<dbReference type="InterPro" id="IPR036850">
    <property type="entry name" value="NDK-like_dom_sf"/>
</dbReference>
<dbReference type="InterPro" id="IPR001564">
    <property type="entry name" value="Nucleoside_diP_kinase"/>
</dbReference>
<dbReference type="InterPro" id="IPR023005">
    <property type="entry name" value="Nucleoside_diP_kinase_AS"/>
</dbReference>
<dbReference type="NCBIfam" id="NF001908">
    <property type="entry name" value="PRK00668.1"/>
    <property type="match status" value="1"/>
</dbReference>
<dbReference type="PANTHER" id="PTHR11349">
    <property type="entry name" value="NUCLEOSIDE DIPHOSPHATE KINASE"/>
    <property type="match status" value="1"/>
</dbReference>
<dbReference type="Pfam" id="PF00334">
    <property type="entry name" value="NDK"/>
    <property type="match status" value="1"/>
</dbReference>
<dbReference type="PRINTS" id="PR01243">
    <property type="entry name" value="NUCDPKINASE"/>
</dbReference>
<dbReference type="SMART" id="SM00562">
    <property type="entry name" value="NDK"/>
    <property type="match status" value="1"/>
</dbReference>
<dbReference type="SUPFAM" id="SSF54919">
    <property type="entry name" value="Nucleoside diphosphate kinase, NDK"/>
    <property type="match status" value="1"/>
</dbReference>
<dbReference type="PROSITE" id="PS00469">
    <property type="entry name" value="NDPK"/>
    <property type="match status" value="1"/>
</dbReference>
<dbReference type="PROSITE" id="PS51374">
    <property type="entry name" value="NDPK_LIKE"/>
    <property type="match status" value="1"/>
</dbReference>
<sequence>MEQTFFIIKPDGVKRGLVGEVLKRIEQRGFTIEKLEFRSQVSEELIDQHYQDLVGQSFYPPIREFMTSGPVLVGVISGPKVIETWRTMMGATRPEEALPGTIRGDFAKAAGENEIIQNVVHGSDSEESAKREIALWF</sequence>
<protein>
    <recommendedName>
        <fullName evidence="1">Nucleoside diphosphate kinase</fullName>
        <shortName evidence="1">NDK</shortName>
        <shortName evidence="1">NDP kinase</shortName>
        <ecNumber evidence="1">2.7.4.6</ecNumber>
    </recommendedName>
    <alternativeName>
        <fullName evidence="1">Nucleoside-2-P kinase</fullName>
    </alternativeName>
</protein>
<reference key="1">
    <citation type="journal article" date="2009" name="BMC Genomics">
        <title>Genome evolution driven by host adaptations results in a more virulent and antimicrobial-resistant Streptococcus pneumoniae serotype 14.</title>
        <authorList>
            <person name="Ding F."/>
            <person name="Tang P."/>
            <person name="Hsu M.-H."/>
            <person name="Cui P."/>
            <person name="Hu S."/>
            <person name="Yu J."/>
            <person name="Chiu C.-H."/>
        </authorList>
    </citation>
    <scope>NUCLEOTIDE SEQUENCE [LARGE SCALE GENOMIC DNA]</scope>
    <source>
        <strain>CGSP14</strain>
    </source>
</reference>
<comment type="function">
    <text evidence="1">Major role in the synthesis of nucleoside triphosphates other than ATP. The ATP gamma phosphate is transferred to the NDP beta phosphate via a ping-pong mechanism, using a phosphorylated active-site intermediate.</text>
</comment>
<comment type="catalytic activity">
    <reaction evidence="1">
        <text>a 2'-deoxyribonucleoside 5'-diphosphate + ATP = a 2'-deoxyribonucleoside 5'-triphosphate + ADP</text>
        <dbReference type="Rhea" id="RHEA:44640"/>
        <dbReference type="ChEBI" id="CHEBI:30616"/>
        <dbReference type="ChEBI" id="CHEBI:61560"/>
        <dbReference type="ChEBI" id="CHEBI:73316"/>
        <dbReference type="ChEBI" id="CHEBI:456216"/>
        <dbReference type="EC" id="2.7.4.6"/>
    </reaction>
</comment>
<comment type="catalytic activity">
    <reaction evidence="1">
        <text>a ribonucleoside 5'-diphosphate + ATP = a ribonucleoside 5'-triphosphate + ADP</text>
        <dbReference type="Rhea" id="RHEA:18113"/>
        <dbReference type="ChEBI" id="CHEBI:30616"/>
        <dbReference type="ChEBI" id="CHEBI:57930"/>
        <dbReference type="ChEBI" id="CHEBI:61557"/>
        <dbReference type="ChEBI" id="CHEBI:456216"/>
        <dbReference type="EC" id="2.7.4.6"/>
    </reaction>
</comment>
<comment type="cofactor">
    <cofactor evidence="1">
        <name>Mg(2+)</name>
        <dbReference type="ChEBI" id="CHEBI:18420"/>
    </cofactor>
</comment>
<comment type="subunit">
    <text evidence="1">Homotetramer.</text>
</comment>
<comment type="subcellular location">
    <subcellularLocation>
        <location evidence="1">Cytoplasm</location>
    </subcellularLocation>
</comment>
<comment type="similarity">
    <text evidence="1">Belongs to the NDK family.</text>
</comment>
<organism>
    <name type="scientific">Streptococcus pneumoniae (strain CGSP14)</name>
    <dbReference type="NCBI Taxonomy" id="516950"/>
    <lineage>
        <taxon>Bacteria</taxon>
        <taxon>Bacillati</taxon>
        <taxon>Bacillota</taxon>
        <taxon>Bacilli</taxon>
        <taxon>Lactobacillales</taxon>
        <taxon>Streptococcaceae</taxon>
        <taxon>Streptococcus</taxon>
    </lineage>
</organism>
<feature type="chain" id="PRO_1000125024" description="Nucleoside diphosphate kinase">
    <location>
        <begin position="1"/>
        <end position="137"/>
    </location>
</feature>
<feature type="active site" description="Pros-phosphohistidine intermediate" evidence="1">
    <location>
        <position position="121"/>
    </location>
</feature>
<feature type="binding site" evidence="1">
    <location>
        <position position="9"/>
    </location>
    <ligand>
        <name>ATP</name>
        <dbReference type="ChEBI" id="CHEBI:30616"/>
    </ligand>
</feature>
<feature type="binding site" evidence="1">
    <location>
        <position position="58"/>
    </location>
    <ligand>
        <name>ATP</name>
        <dbReference type="ChEBI" id="CHEBI:30616"/>
    </ligand>
</feature>
<feature type="binding site" evidence="1">
    <location>
        <position position="86"/>
    </location>
    <ligand>
        <name>ATP</name>
        <dbReference type="ChEBI" id="CHEBI:30616"/>
    </ligand>
</feature>
<feature type="binding site" evidence="1">
    <location>
        <position position="92"/>
    </location>
    <ligand>
        <name>ATP</name>
        <dbReference type="ChEBI" id="CHEBI:30616"/>
    </ligand>
</feature>
<feature type="binding site" evidence="1">
    <location>
        <position position="103"/>
    </location>
    <ligand>
        <name>ATP</name>
        <dbReference type="ChEBI" id="CHEBI:30616"/>
    </ligand>
</feature>
<feature type="binding site" evidence="1">
    <location>
        <position position="113"/>
    </location>
    <ligand>
        <name>ATP</name>
        <dbReference type="ChEBI" id="CHEBI:30616"/>
    </ligand>
</feature>